<protein>
    <recommendedName>
        <fullName evidence="1">3-isopropylmalate dehydratase large subunit</fullName>
        <ecNumber evidence="1">4.2.1.33</ecNumber>
    </recommendedName>
    <alternativeName>
        <fullName evidence="1">Alpha-IPM isomerase</fullName>
        <shortName evidence="1">IPMI</shortName>
    </alternativeName>
    <alternativeName>
        <fullName evidence="1">Isopropylmalate isomerase</fullName>
    </alternativeName>
</protein>
<proteinExistence type="inferred from homology"/>
<gene>
    <name evidence="1" type="primary">leuC</name>
    <name type="ordered locus">Oter_2680</name>
</gene>
<reference key="1">
    <citation type="journal article" date="2011" name="J. Bacteriol.">
        <title>Genome sequence of the verrucomicrobium Opitutus terrae PB90-1, an abundant inhabitant of rice paddy soil ecosystems.</title>
        <authorList>
            <person name="van Passel M.W."/>
            <person name="Kant R."/>
            <person name="Palva A."/>
            <person name="Copeland A."/>
            <person name="Lucas S."/>
            <person name="Lapidus A."/>
            <person name="Glavina del Rio T."/>
            <person name="Pitluck S."/>
            <person name="Goltsman E."/>
            <person name="Clum A."/>
            <person name="Sun H."/>
            <person name="Schmutz J."/>
            <person name="Larimer F.W."/>
            <person name="Land M.L."/>
            <person name="Hauser L."/>
            <person name="Kyrpides N."/>
            <person name="Mikhailova N."/>
            <person name="Richardson P.P."/>
            <person name="Janssen P.H."/>
            <person name="de Vos W.M."/>
            <person name="Smidt H."/>
        </authorList>
    </citation>
    <scope>NUCLEOTIDE SEQUENCE [LARGE SCALE GENOMIC DNA]</scope>
    <source>
        <strain>DSM 11246 / JCM 15787 / PB90-1</strain>
    </source>
</reference>
<accession>B1ZUZ1</accession>
<sequence>MAKSLFQKVWDAHTVRKLANGQTQLLIGTHLIHEVTSPQAFGMLRDLGLKVAFPQRTFATVDHIVPTDQVVEPYRDPLAQAMMDELRKNCAEFGITFFDRSTGKQGIVHIVGPEQGITQPGTTIACGDSHTSTHGAFGAIAFGIGTSQVRDVLATQTMALGPLKVRRIEVNGKLRPGVYAKDVILHIIRTLGVNGGTGFAYEYAGEVFDRFSMEERMTVCNMSIEGGARVGYVNPDDTTFTYLKGRPYAPKGAAWDEAVTRWRAVASDSGCRYDDVVKINAADIAPTVTWGINPGQGISINEQIPDPAKATDADEKANIEEALAYMKLQPGAPIKGTKINVAFLGSCTNGRLSDFQEVAKFVKGKRVAAGVKAIAVPGSQIVALQCEKLGLDKILSEAGFEWRAAGCSMCLAMNPDKLIGDQLCASSSNRNFKGRQGSPTGRTILMSPLMVAAAAVTGQVADAREVFGVSAN</sequence>
<organism>
    <name type="scientific">Opitutus terrae (strain DSM 11246 / JCM 15787 / PB90-1)</name>
    <dbReference type="NCBI Taxonomy" id="452637"/>
    <lineage>
        <taxon>Bacteria</taxon>
        <taxon>Pseudomonadati</taxon>
        <taxon>Verrucomicrobiota</taxon>
        <taxon>Opitutia</taxon>
        <taxon>Opitutales</taxon>
        <taxon>Opitutaceae</taxon>
        <taxon>Opitutus</taxon>
    </lineage>
</organism>
<dbReference type="EC" id="4.2.1.33" evidence="1"/>
<dbReference type="EMBL" id="CP001032">
    <property type="protein sequence ID" value="ACB75961.1"/>
    <property type="molecule type" value="Genomic_DNA"/>
</dbReference>
<dbReference type="RefSeq" id="WP_012375496.1">
    <property type="nucleotide sequence ID" value="NC_010571.1"/>
</dbReference>
<dbReference type="SMR" id="B1ZUZ1"/>
<dbReference type="STRING" id="452637.Oter_2680"/>
<dbReference type="KEGG" id="ote:Oter_2680"/>
<dbReference type="eggNOG" id="COG0065">
    <property type="taxonomic scope" value="Bacteria"/>
</dbReference>
<dbReference type="HOGENOM" id="CLU_006714_3_4_0"/>
<dbReference type="OrthoDB" id="9802769at2"/>
<dbReference type="UniPathway" id="UPA00048">
    <property type="reaction ID" value="UER00071"/>
</dbReference>
<dbReference type="Proteomes" id="UP000007013">
    <property type="component" value="Chromosome"/>
</dbReference>
<dbReference type="GO" id="GO:0003861">
    <property type="term" value="F:3-isopropylmalate dehydratase activity"/>
    <property type="evidence" value="ECO:0007669"/>
    <property type="project" value="UniProtKB-UniRule"/>
</dbReference>
<dbReference type="GO" id="GO:0051539">
    <property type="term" value="F:4 iron, 4 sulfur cluster binding"/>
    <property type="evidence" value="ECO:0007669"/>
    <property type="project" value="UniProtKB-KW"/>
</dbReference>
<dbReference type="GO" id="GO:0046872">
    <property type="term" value="F:metal ion binding"/>
    <property type="evidence" value="ECO:0007669"/>
    <property type="project" value="UniProtKB-KW"/>
</dbReference>
<dbReference type="GO" id="GO:0009098">
    <property type="term" value="P:L-leucine biosynthetic process"/>
    <property type="evidence" value="ECO:0007669"/>
    <property type="project" value="UniProtKB-UniRule"/>
</dbReference>
<dbReference type="CDD" id="cd01583">
    <property type="entry name" value="IPMI"/>
    <property type="match status" value="1"/>
</dbReference>
<dbReference type="Gene3D" id="3.30.499.10">
    <property type="entry name" value="Aconitase, domain 3"/>
    <property type="match status" value="2"/>
</dbReference>
<dbReference type="HAMAP" id="MF_01026">
    <property type="entry name" value="LeuC_type1"/>
    <property type="match status" value="1"/>
</dbReference>
<dbReference type="InterPro" id="IPR004430">
    <property type="entry name" value="3-IsopropMal_deHydase_lsu"/>
</dbReference>
<dbReference type="InterPro" id="IPR015931">
    <property type="entry name" value="Acnase/IPM_dHydase_lsu_aba_1/3"/>
</dbReference>
<dbReference type="InterPro" id="IPR001030">
    <property type="entry name" value="Acoase/IPM_deHydtase_lsu_aba"/>
</dbReference>
<dbReference type="InterPro" id="IPR018136">
    <property type="entry name" value="Aconitase_4Fe-4S_BS"/>
</dbReference>
<dbReference type="InterPro" id="IPR036008">
    <property type="entry name" value="Aconitase_4Fe-4S_dom"/>
</dbReference>
<dbReference type="InterPro" id="IPR050067">
    <property type="entry name" value="IPM_dehydratase_rel_enz"/>
</dbReference>
<dbReference type="InterPro" id="IPR033941">
    <property type="entry name" value="IPMI_cat"/>
</dbReference>
<dbReference type="NCBIfam" id="TIGR00170">
    <property type="entry name" value="leuC"/>
    <property type="match status" value="1"/>
</dbReference>
<dbReference type="NCBIfam" id="NF004016">
    <property type="entry name" value="PRK05478.1"/>
    <property type="match status" value="1"/>
</dbReference>
<dbReference type="NCBIfam" id="NF009116">
    <property type="entry name" value="PRK12466.1"/>
    <property type="match status" value="1"/>
</dbReference>
<dbReference type="PANTHER" id="PTHR43822:SF9">
    <property type="entry name" value="3-ISOPROPYLMALATE DEHYDRATASE"/>
    <property type="match status" value="1"/>
</dbReference>
<dbReference type="PANTHER" id="PTHR43822">
    <property type="entry name" value="HOMOACONITASE, MITOCHONDRIAL-RELATED"/>
    <property type="match status" value="1"/>
</dbReference>
<dbReference type="Pfam" id="PF00330">
    <property type="entry name" value="Aconitase"/>
    <property type="match status" value="1"/>
</dbReference>
<dbReference type="PRINTS" id="PR00415">
    <property type="entry name" value="ACONITASE"/>
</dbReference>
<dbReference type="SUPFAM" id="SSF53732">
    <property type="entry name" value="Aconitase iron-sulfur domain"/>
    <property type="match status" value="1"/>
</dbReference>
<dbReference type="PROSITE" id="PS01244">
    <property type="entry name" value="ACONITASE_2"/>
    <property type="match status" value="1"/>
</dbReference>
<name>LEUC_OPITP</name>
<keyword id="KW-0004">4Fe-4S</keyword>
<keyword id="KW-0028">Amino-acid biosynthesis</keyword>
<keyword id="KW-0100">Branched-chain amino acid biosynthesis</keyword>
<keyword id="KW-0408">Iron</keyword>
<keyword id="KW-0411">Iron-sulfur</keyword>
<keyword id="KW-0432">Leucine biosynthesis</keyword>
<keyword id="KW-0456">Lyase</keyword>
<keyword id="KW-0479">Metal-binding</keyword>
<keyword id="KW-1185">Reference proteome</keyword>
<evidence type="ECO:0000255" key="1">
    <source>
        <dbReference type="HAMAP-Rule" id="MF_01026"/>
    </source>
</evidence>
<comment type="function">
    <text evidence="1">Catalyzes the isomerization between 2-isopropylmalate and 3-isopropylmalate, via the formation of 2-isopropylmaleate.</text>
</comment>
<comment type="catalytic activity">
    <reaction evidence="1">
        <text>(2R,3S)-3-isopropylmalate = (2S)-2-isopropylmalate</text>
        <dbReference type="Rhea" id="RHEA:32287"/>
        <dbReference type="ChEBI" id="CHEBI:1178"/>
        <dbReference type="ChEBI" id="CHEBI:35121"/>
        <dbReference type="EC" id="4.2.1.33"/>
    </reaction>
</comment>
<comment type="cofactor">
    <cofactor evidence="1">
        <name>[4Fe-4S] cluster</name>
        <dbReference type="ChEBI" id="CHEBI:49883"/>
    </cofactor>
    <text evidence="1">Binds 1 [4Fe-4S] cluster per subunit.</text>
</comment>
<comment type="pathway">
    <text evidence="1">Amino-acid biosynthesis; L-leucine biosynthesis; L-leucine from 3-methyl-2-oxobutanoate: step 2/4.</text>
</comment>
<comment type="subunit">
    <text evidence="1">Heterodimer of LeuC and LeuD.</text>
</comment>
<comment type="similarity">
    <text evidence="1">Belongs to the aconitase/IPM isomerase family. LeuC type 1 subfamily.</text>
</comment>
<feature type="chain" id="PRO_1000135700" description="3-isopropylmalate dehydratase large subunit">
    <location>
        <begin position="1"/>
        <end position="472"/>
    </location>
</feature>
<feature type="binding site" evidence="1">
    <location>
        <position position="347"/>
    </location>
    <ligand>
        <name>[4Fe-4S] cluster</name>
        <dbReference type="ChEBI" id="CHEBI:49883"/>
    </ligand>
</feature>
<feature type="binding site" evidence="1">
    <location>
        <position position="407"/>
    </location>
    <ligand>
        <name>[4Fe-4S] cluster</name>
        <dbReference type="ChEBI" id="CHEBI:49883"/>
    </ligand>
</feature>
<feature type="binding site" evidence="1">
    <location>
        <position position="410"/>
    </location>
    <ligand>
        <name>[4Fe-4S] cluster</name>
        <dbReference type="ChEBI" id="CHEBI:49883"/>
    </ligand>
</feature>